<accession>Q5IZC8</accession>
<accession>Q9M0R9</accession>
<keyword id="KW-0150">Chloroplast</keyword>
<keyword id="KW-0472">Membrane</keyword>
<keyword id="KW-0934">Plastid</keyword>
<keyword id="KW-1002">Plastid outer membrane</keyword>
<keyword id="KW-0653">Protein transport</keyword>
<keyword id="KW-1185">Reference proteome</keyword>
<keyword id="KW-0812">Transmembrane</keyword>
<keyword id="KW-1134">Transmembrane beta strand</keyword>
<keyword id="KW-0813">Transport</keyword>
<gene>
    <name type="primary">TOC75-4</name>
    <name type="ordered locus">At4g09080</name>
    <name type="ORF">F23J3.110</name>
</gene>
<evidence type="ECO:0000250" key="1"/>
<evidence type="ECO:0000255" key="2"/>
<evidence type="ECO:0000269" key="3">
    <source>
    </source>
</evidence>
<evidence type="ECO:0000305" key="4"/>
<feature type="chain" id="PRO_0000144794" description="Protein TOC75-4, chloroplastic">
    <location>
        <begin position="1"/>
        <end position="396"/>
    </location>
</feature>
<feature type="topological domain" description="Chloroplast intermembrane" evidence="2">
    <location>
        <begin position="1"/>
        <end position="23"/>
    </location>
</feature>
<feature type="transmembrane region" description="Beta stranded" evidence="2">
    <location>
        <begin position="24"/>
        <end position="32"/>
    </location>
</feature>
<feature type="topological domain" description="Cytoplasmic" evidence="2">
    <location>
        <begin position="33"/>
        <end position="87"/>
    </location>
</feature>
<feature type="transmembrane region" description="Beta stranded" evidence="2">
    <location>
        <begin position="88"/>
        <end position="96"/>
    </location>
</feature>
<feature type="topological domain" description="Chloroplast intermembrane" evidence="2">
    <location>
        <begin position="97"/>
        <end position="140"/>
    </location>
</feature>
<feature type="transmembrane region" description="Beta stranded" evidence="2">
    <location>
        <begin position="141"/>
        <end position="148"/>
    </location>
</feature>
<feature type="topological domain" description="Cytoplasmic" evidence="2">
    <location>
        <begin position="149"/>
        <end position="156"/>
    </location>
</feature>
<feature type="transmembrane region" description="Beta stranded" evidence="2">
    <location>
        <begin position="157"/>
        <end position="164"/>
    </location>
</feature>
<feature type="topological domain" description="Chloroplast intermembrane" evidence="2">
    <location>
        <begin position="165"/>
        <end position="271"/>
    </location>
</feature>
<feature type="transmembrane region" description="Beta stranded" evidence="2">
    <location>
        <begin position="272"/>
        <end position="280"/>
    </location>
</feature>
<feature type="topological domain" description="Cytoplasmic" evidence="2">
    <location>
        <begin position="281"/>
        <end position="292"/>
    </location>
</feature>
<feature type="transmembrane region" description="Beta stranded" evidence="2">
    <location>
        <begin position="293"/>
        <end position="301"/>
    </location>
</feature>
<feature type="topological domain" description="Chloroplast intermembrane" evidence="2">
    <location>
        <begin position="302"/>
        <end position="363"/>
    </location>
</feature>
<feature type="transmembrane region" description="Beta stranded" evidence="2">
    <location>
        <begin position="364"/>
        <end position="370"/>
    </location>
</feature>
<feature type="topological domain" description="Cytoplasmic" evidence="2">
    <location>
        <begin position="371"/>
        <end position="384"/>
    </location>
</feature>
<feature type="transmembrane region" description="Beta stranded" evidence="2">
    <location>
        <begin position="385"/>
        <end position="392"/>
    </location>
</feature>
<feature type="topological domain" description="Chloroplast intermembrane" evidence="2">
    <location>
        <begin position="393"/>
        <end position="396"/>
    </location>
</feature>
<dbReference type="EMBL" id="AY585655">
    <property type="protein sequence ID" value="AAT08975.1"/>
    <property type="molecule type" value="mRNA"/>
</dbReference>
<dbReference type="EMBL" id="AL161514">
    <property type="protein sequence ID" value="CAB78032.1"/>
    <property type="status" value="ALT_SEQ"/>
    <property type="molecule type" value="Genomic_DNA"/>
</dbReference>
<dbReference type="EMBL" id="CP002687">
    <property type="protein sequence ID" value="AEE82720.1"/>
    <property type="molecule type" value="Genomic_DNA"/>
</dbReference>
<dbReference type="PIR" id="H85091">
    <property type="entry name" value="H85091"/>
</dbReference>
<dbReference type="RefSeq" id="NP_001329162.1">
    <property type="nucleotide sequence ID" value="NM_001340610.1"/>
</dbReference>
<dbReference type="RefSeq" id="NP_192647.2">
    <property type="nucleotide sequence ID" value="NM_116977.3"/>
</dbReference>
<dbReference type="SMR" id="Q5IZC8"/>
<dbReference type="FunCoup" id="Q5IZC8">
    <property type="interactions" value="6"/>
</dbReference>
<dbReference type="IntAct" id="Q5IZC8">
    <property type="interactions" value="2"/>
</dbReference>
<dbReference type="STRING" id="3702.Q5IZC8"/>
<dbReference type="iPTMnet" id="Q5IZC8"/>
<dbReference type="PaxDb" id="3702-AT4G09080.1"/>
<dbReference type="EnsemblPlants" id="AT4G09080.1">
    <property type="protein sequence ID" value="AT4G09080.1"/>
    <property type="gene ID" value="AT4G09080"/>
</dbReference>
<dbReference type="GeneID" id="826486"/>
<dbReference type="Gramene" id="AT4G09080.1">
    <property type="protein sequence ID" value="AT4G09080.1"/>
    <property type="gene ID" value="AT4G09080"/>
</dbReference>
<dbReference type="KEGG" id="ath:AT4G09080"/>
<dbReference type="Araport" id="AT4G09080"/>
<dbReference type="TAIR" id="AT4G09080">
    <property type="gene designation" value="TOC75-IV"/>
</dbReference>
<dbReference type="eggNOG" id="ENOG502QTZ3">
    <property type="taxonomic scope" value="Eukaryota"/>
</dbReference>
<dbReference type="HOGENOM" id="CLU_000837_26_1_1"/>
<dbReference type="InParanoid" id="Q5IZC8"/>
<dbReference type="OMA" id="ACHNILE"/>
<dbReference type="PhylomeDB" id="Q5IZC8"/>
<dbReference type="PRO" id="PR:Q5IZC8"/>
<dbReference type="Proteomes" id="UP000006548">
    <property type="component" value="Chromosome 4"/>
</dbReference>
<dbReference type="ExpressionAtlas" id="Q5IZC8">
    <property type="expression patterns" value="baseline and differential"/>
</dbReference>
<dbReference type="GO" id="GO:0009707">
    <property type="term" value="C:chloroplast outer membrane"/>
    <property type="evidence" value="ECO:0007669"/>
    <property type="project" value="UniProtKB-SubCell"/>
</dbReference>
<dbReference type="GO" id="GO:0009662">
    <property type="term" value="P:etioplast organization"/>
    <property type="evidence" value="ECO:0000315"/>
    <property type="project" value="TAIR"/>
</dbReference>
<dbReference type="GO" id="GO:0045036">
    <property type="term" value="P:protein targeting to chloroplast"/>
    <property type="evidence" value="ECO:0000314"/>
    <property type="project" value="TAIR"/>
</dbReference>
<dbReference type="GO" id="GO:0015031">
    <property type="term" value="P:protein transport"/>
    <property type="evidence" value="ECO:0007669"/>
    <property type="project" value="UniProtKB-KW"/>
</dbReference>
<dbReference type="FunFam" id="2.40.160.50:FF:000004">
    <property type="entry name" value="Protein TOC75-3 chloroplastic"/>
    <property type="match status" value="1"/>
</dbReference>
<dbReference type="Gene3D" id="2.40.160.50">
    <property type="entry name" value="membrane protein fhac: a member of the omp85/tpsb transporter family"/>
    <property type="match status" value="1"/>
</dbReference>
<dbReference type="InterPro" id="IPR000184">
    <property type="entry name" value="Bac_surfAg_D15"/>
</dbReference>
<dbReference type="InterPro" id="IPR039910">
    <property type="entry name" value="D15-like"/>
</dbReference>
<dbReference type="PANTHER" id="PTHR12815:SF42">
    <property type="entry name" value="BACTERIAL SURFACE ANTIGEN (D15) DOMAIN-CONTAINING PROTEIN"/>
    <property type="match status" value="1"/>
</dbReference>
<dbReference type="PANTHER" id="PTHR12815">
    <property type="entry name" value="SORTING AND ASSEMBLY MACHINERY SAMM50 PROTEIN FAMILY MEMBER"/>
    <property type="match status" value="1"/>
</dbReference>
<dbReference type="Pfam" id="PF01103">
    <property type="entry name" value="Omp85"/>
    <property type="match status" value="1"/>
</dbReference>
<name>TC754_ARATH</name>
<sequence length="396" mass="43632">MEAVKEAVRKIKSLVIPHADEKDNGIVFEIKLNETDQRVEKWGLDPSLDFFEVTGNCNLGRPNSEGSNQSLMGSVTIRNIFNPKLDDLLSKIEYVRFLEAVKKPRNRTFKTSFFNSRKLSPVFTGGPGYEDLVPPMFVGRDCLKATITENLTRQRELTYGVMFEEIITRDENRRISENGLLLSPDGGISINGPPTTLSGTGIDHIATLQANITRDNTKLVNGAVVGEKNIFQVDQGLGIGNNFPLFNRHQLSLTSFIQLKQVEEGSDKPQPPVLVLHGRYGGCIGDLPSYDVFALGGPNSVRGYSMGELGAAKNILELGAEIRIPVKNTHVYAFAEHGNDLGSSKDVKGNPTGLYRKMGHGSSYGLGVKLGMVRAEYTVRHNRGTGALFLRFGERY</sequence>
<proteinExistence type="evidence at transcript level"/>
<reference key="1">
    <citation type="journal article" date="2005" name="Plant Physiol.">
        <title>A molecular-genetic study of the Arabidopsis toc75 gene family.</title>
        <authorList>
            <person name="Baldwin A."/>
            <person name="Wardle A."/>
            <person name="Patel R."/>
            <person name="Dudley P."/>
            <person name="Park S.K."/>
            <person name="Twell D."/>
            <person name="Inoue K."/>
            <person name="Jarvis P."/>
        </authorList>
    </citation>
    <scope>NUCLEOTIDE SEQUENCE [MRNA]</scope>
    <scope>FUNCTION</scope>
    <scope>SUBCELLULAR LOCATION</scope>
    <scope>TISSUE SPECIFICITY</scope>
    <source>
        <strain>cv. Columbia</strain>
        <tissue>Seedling</tissue>
    </source>
</reference>
<reference key="2">
    <citation type="journal article" date="1999" name="Nature">
        <title>Sequence and analysis of chromosome 4 of the plant Arabidopsis thaliana.</title>
        <authorList>
            <person name="Mayer K.F.X."/>
            <person name="Schueller C."/>
            <person name="Wambutt R."/>
            <person name="Murphy G."/>
            <person name="Volckaert G."/>
            <person name="Pohl T."/>
            <person name="Duesterhoeft A."/>
            <person name="Stiekema W."/>
            <person name="Entian K.-D."/>
            <person name="Terryn N."/>
            <person name="Harris B."/>
            <person name="Ansorge W."/>
            <person name="Brandt P."/>
            <person name="Grivell L.A."/>
            <person name="Rieger M."/>
            <person name="Weichselgartner M."/>
            <person name="de Simone V."/>
            <person name="Obermaier B."/>
            <person name="Mache R."/>
            <person name="Mueller M."/>
            <person name="Kreis M."/>
            <person name="Delseny M."/>
            <person name="Puigdomenech P."/>
            <person name="Watson M."/>
            <person name="Schmidtheini T."/>
            <person name="Reichert B."/>
            <person name="Portetelle D."/>
            <person name="Perez-Alonso M."/>
            <person name="Boutry M."/>
            <person name="Bancroft I."/>
            <person name="Vos P."/>
            <person name="Hoheisel J."/>
            <person name="Zimmermann W."/>
            <person name="Wedler H."/>
            <person name="Ridley P."/>
            <person name="Langham S.-A."/>
            <person name="McCullagh B."/>
            <person name="Bilham L."/>
            <person name="Robben J."/>
            <person name="van der Schueren J."/>
            <person name="Grymonprez B."/>
            <person name="Chuang Y.-J."/>
            <person name="Vandenbussche F."/>
            <person name="Braeken M."/>
            <person name="Weltjens I."/>
            <person name="Voet M."/>
            <person name="Bastiaens I."/>
            <person name="Aert R."/>
            <person name="Defoor E."/>
            <person name="Weitzenegger T."/>
            <person name="Bothe G."/>
            <person name="Ramsperger U."/>
            <person name="Hilbert H."/>
            <person name="Braun M."/>
            <person name="Holzer E."/>
            <person name="Brandt A."/>
            <person name="Peters S."/>
            <person name="van Staveren M."/>
            <person name="Dirkse W."/>
            <person name="Mooijman P."/>
            <person name="Klein Lankhorst R."/>
            <person name="Rose M."/>
            <person name="Hauf J."/>
            <person name="Koetter P."/>
            <person name="Berneiser S."/>
            <person name="Hempel S."/>
            <person name="Feldpausch M."/>
            <person name="Lamberth S."/>
            <person name="Van den Daele H."/>
            <person name="De Keyser A."/>
            <person name="Buysshaert C."/>
            <person name="Gielen J."/>
            <person name="Villarroel R."/>
            <person name="De Clercq R."/>
            <person name="van Montagu M."/>
            <person name="Rogers J."/>
            <person name="Cronin A."/>
            <person name="Quail M.A."/>
            <person name="Bray-Allen S."/>
            <person name="Clark L."/>
            <person name="Doggett J."/>
            <person name="Hall S."/>
            <person name="Kay M."/>
            <person name="Lennard N."/>
            <person name="McLay K."/>
            <person name="Mayes R."/>
            <person name="Pettett A."/>
            <person name="Rajandream M.A."/>
            <person name="Lyne M."/>
            <person name="Benes V."/>
            <person name="Rechmann S."/>
            <person name="Borkova D."/>
            <person name="Bloecker H."/>
            <person name="Scharfe M."/>
            <person name="Grimm M."/>
            <person name="Loehnert T.-H."/>
            <person name="Dose S."/>
            <person name="de Haan M."/>
            <person name="Maarse A.C."/>
            <person name="Schaefer M."/>
            <person name="Mueller-Auer S."/>
            <person name="Gabel C."/>
            <person name="Fuchs M."/>
            <person name="Fartmann B."/>
            <person name="Granderath K."/>
            <person name="Dauner D."/>
            <person name="Herzl A."/>
            <person name="Neumann S."/>
            <person name="Argiriou A."/>
            <person name="Vitale D."/>
            <person name="Liguori R."/>
            <person name="Piravandi E."/>
            <person name="Massenet O."/>
            <person name="Quigley F."/>
            <person name="Clabauld G."/>
            <person name="Muendlein A."/>
            <person name="Felber R."/>
            <person name="Schnabl S."/>
            <person name="Hiller R."/>
            <person name="Schmidt W."/>
            <person name="Lecharny A."/>
            <person name="Aubourg S."/>
            <person name="Chefdor F."/>
            <person name="Cooke R."/>
            <person name="Berger C."/>
            <person name="Monfort A."/>
            <person name="Casacuberta E."/>
            <person name="Gibbons T."/>
            <person name="Weber N."/>
            <person name="Vandenbol M."/>
            <person name="Bargues M."/>
            <person name="Terol J."/>
            <person name="Torres A."/>
            <person name="Perez-Perez A."/>
            <person name="Purnelle B."/>
            <person name="Bent E."/>
            <person name="Johnson S."/>
            <person name="Tacon D."/>
            <person name="Jesse T."/>
            <person name="Heijnen L."/>
            <person name="Schwarz S."/>
            <person name="Scholler P."/>
            <person name="Heber S."/>
            <person name="Francs P."/>
            <person name="Bielke C."/>
            <person name="Frishman D."/>
            <person name="Haase D."/>
            <person name="Lemcke K."/>
            <person name="Mewes H.-W."/>
            <person name="Stocker S."/>
            <person name="Zaccaria P."/>
            <person name="Bevan M."/>
            <person name="Wilson R.K."/>
            <person name="de la Bastide M."/>
            <person name="Habermann K."/>
            <person name="Parnell L."/>
            <person name="Dedhia N."/>
            <person name="Gnoj L."/>
            <person name="Schutz K."/>
            <person name="Huang E."/>
            <person name="Spiegel L."/>
            <person name="Sekhon M."/>
            <person name="Murray J."/>
            <person name="Sheet P."/>
            <person name="Cordes M."/>
            <person name="Abu-Threideh J."/>
            <person name="Stoneking T."/>
            <person name="Kalicki J."/>
            <person name="Graves T."/>
            <person name="Harmon G."/>
            <person name="Edwards J."/>
            <person name="Latreille P."/>
            <person name="Courtney L."/>
            <person name="Cloud J."/>
            <person name="Abbott A."/>
            <person name="Scott K."/>
            <person name="Johnson D."/>
            <person name="Minx P."/>
            <person name="Bentley D."/>
            <person name="Fulton B."/>
            <person name="Miller N."/>
            <person name="Greco T."/>
            <person name="Kemp K."/>
            <person name="Kramer J."/>
            <person name="Fulton L."/>
            <person name="Mardis E."/>
            <person name="Dante M."/>
            <person name="Pepin K."/>
            <person name="Hillier L.W."/>
            <person name="Nelson J."/>
            <person name="Spieth J."/>
            <person name="Ryan E."/>
            <person name="Andrews S."/>
            <person name="Geisel C."/>
            <person name="Layman D."/>
            <person name="Du H."/>
            <person name="Ali J."/>
            <person name="Berghoff A."/>
            <person name="Jones K."/>
            <person name="Drone K."/>
            <person name="Cotton M."/>
            <person name="Joshu C."/>
            <person name="Antonoiu B."/>
            <person name="Zidanic M."/>
            <person name="Strong C."/>
            <person name="Sun H."/>
            <person name="Lamar B."/>
            <person name="Yordan C."/>
            <person name="Ma P."/>
            <person name="Zhong J."/>
            <person name="Preston R."/>
            <person name="Vil D."/>
            <person name="Shekher M."/>
            <person name="Matero A."/>
            <person name="Shah R."/>
            <person name="Swaby I.K."/>
            <person name="O'Shaughnessy A."/>
            <person name="Rodriguez M."/>
            <person name="Hoffman J."/>
            <person name="Till S."/>
            <person name="Granat S."/>
            <person name="Shohdy N."/>
            <person name="Hasegawa A."/>
            <person name="Hameed A."/>
            <person name="Lodhi M."/>
            <person name="Johnson A."/>
            <person name="Chen E."/>
            <person name="Marra M.A."/>
            <person name="Martienssen R."/>
            <person name="McCombie W.R."/>
        </authorList>
    </citation>
    <scope>NUCLEOTIDE SEQUENCE [LARGE SCALE GENOMIC DNA]</scope>
    <source>
        <strain>cv. Columbia</strain>
    </source>
</reference>
<reference key="3">
    <citation type="journal article" date="2017" name="Plant J.">
        <title>Araport11: a complete reannotation of the Arabidopsis thaliana reference genome.</title>
        <authorList>
            <person name="Cheng C.Y."/>
            <person name="Krishnakumar V."/>
            <person name="Chan A.P."/>
            <person name="Thibaud-Nissen F."/>
            <person name="Schobel S."/>
            <person name="Town C.D."/>
        </authorList>
    </citation>
    <scope>GENOME REANNOTATION</scope>
    <source>
        <strain>cv. Columbia</strain>
    </source>
</reference>
<reference key="4">
    <citation type="journal article" date="1997" name="Trends Cell Biol.">
        <title>A consensus nomenclature for the protein-import components of the chloroplast envelope.</title>
        <authorList>
            <person name="Schnell D.J."/>
            <person name="Blobel G."/>
            <person name="Keegstra K."/>
            <person name="Kessler F."/>
            <person name="Ko K."/>
            <person name="Soll J."/>
        </authorList>
    </citation>
    <scope>NOMENCLATURE</scope>
</reference>
<comment type="function">
    <text evidence="1 3">Mediates the insertion of proteins targeted to the outer membrane of chloroplasts. Required for the import of protein precursors into chloroplasts. Forms the voltage-dependent preprotein translocation channels (hydrophilic beta barrel) of the TOC complex in the chloroplastic outer membrane (By similarity). Required for etioplast formation and/or etioplast-chloroplast transition during deetiolation.</text>
</comment>
<comment type="subunit">
    <text evidence="1">Part of the TOC core complex that includes a protein for the specific recognition of transit peptides surrounded by a ring composed of four proteins forming translocation channels, and four to five GTP-binding proteins providing energy. This core complex can interact with components of the TIC complex to form a larger import complex. Chloroplastic protein precursors also interacts with these complexes (By similarity).</text>
</comment>
<comment type="subcellular location">
    <subcellularLocation>
        <location evidence="3">Plastid</location>
        <location evidence="3">Chloroplast outer membrane</location>
        <topology evidence="3">Multi-pass membrane protein</topology>
    </subcellularLocation>
</comment>
<comment type="tissue specificity">
    <text evidence="3">Expressed ubiquitously at low levels.</text>
</comment>
<comment type="domain">
    <text>Transmembrane regions consist mainly of membrane-spanning sided beta-sheets, which are not predicted by sequence analysis tools.</text>
</comment>
<comment type="similarity">
    <text evidence="4">Belongs to the TOC75 family.</text>
</comment>
<comment type="sequence caution" evidence="4">
    <conflict type="erroneous gene model prediction">
        <sequence resource="EMBL-CDS" id="CAB78032"/>
    </conflict>
</comment>
<organism>
    <name type="scientific">Arabidopsis thaliana</name>
    <name type="common">Mouse-ear cress</name>
    <dbReference type="NCBI Taxonomy" id="3702"/>
    <lineage>
        <taxon>Eukaryota</taxon>
        <taxon>Viridiplantae</taxon>
        <taxon>Streptophyta</taxon>
        <taxon>Embryophyta</taxon>
        <taxon>Tracheophyta</taxon>
        <taxon>Spermatophyta</taxon>
        <taxon>Magnoliopsida</taxon>
        <taxon>eudicotyledons</taxon>
        <taxon>Gunneridae</taxon>
        <taxon>Pentapetalae</taxon>
        <taxon>rosids</taxon>
        <taxon>malvids</taxon>
        <taxon>Brassicales</taxon>
        <taxon>Brassicaceae</taxon>
        <taxon>Camelineae</taxon>
        <taxon>Arabidopsis</taxon>
    </lineage>
</organism>
<protein>
    <recommendedName>
        <fullName>Protein TOC75-4, chloroplastic</fullName>
    </recommendedName>
    <alternativeName>
        <fullName>75 kDa translocon at the outer-envelope-membrane of chloroplasts 4</fullName>
        <shortName>AtTOC75-IV</shortName>
    </alternativeName>
</protein>